<feature type="chain" id="PRO_0000126055" description="Small heat shock protein C1">
    <location>
        <begin position="1"/>
        <end position="163"/>
    </location>
</feature>
<feature type="domain" description="sHSP" evidence="1">
    <location>
        <begin position="55"/>
        <end position="163"/>
    </location>
</feature>
<proteinExistence type="inferred from homology"/>
<sequence>MLKYIPAIFAIILSSNIAIASKNYDYISLTPLRHVADLIDSHITNIDHLFNNRLTFYESSSLKSKFITKDKQYIIVMEVPGFDKSQIKVKLNGKKLFIAGNIEDKNKANDSDNYMNKNFNYVISLYEDVDQKSISARLKNGILTIILPRIEVKEQDSREITIN</sequence>
<comment type="similarity">
    <text evidence="1">Belongs to the small heat shock protein (HSP20) family.</text>
</comment>
<keyword id="KW-1185">Reference proteome</keyword>
<keyword id="KW-0346">Stress response</keyword>
<evidence type="ECO:0000255" key="1">
    <source>
        <dbReference type="PROSITE-ProRule" id="PRU00285"/>
    </source>
</evidence>
<organism>
    <name type="scientific">Rickettsia prowazekii (strain Madrid E)</name>
    <dbReference type="NCBI Taxonomy" id="272947"/>
    <lineage>
        <taxon>Bacteria</taxon>
        <taxon>Pseudomonadati</taxon>
        <taxon>Pseudomonadota</taxon>
        <taxon>Alphaproteobacteria</taxon>
        <taxon>Rickettsiales</taxon>
        <taxon>Rickettsiaceae</taxon>
        <taxon>Rickettsieae</taxon>
        <taxon>Rickettsia</taxon>
        <taxon>typhus group</taxon>
    </lineage>
</organism>
<gene>
    <name type="primary">hspC1</name>
    <name type="ordered locus">RP273</name>
</gene>
<protein>
    <recommendedName>
        <fullName>Small heat shock protein C1</fullName>
    </recommendedName>
</protein>
<dbReference type="EMBL" id="AJ235271">
    <property type="protein sequence ID" value="CAA14735.1"/>
    <property type="molecule type" value="Genomic_DNA"/>
</dbReference>
<dbReference type="PIR" id="E71682">
    <property type="entry name" value="E71682"/>
</dbReference>
<dbReference type="RefSeq" id="NP_220658.1">
    <property type="nucleotide sequence ID" value="NC_000963.1"/>
</dbReference>
<dbReference type="RefSeq" id="WP_004599375.1">
    <property type="nucleotide sequence ID" value="NC_000963.1"/>
</dbReference>
<dbReference type="SMR" id="Q9ZDQ3"/>
<dbReference type="STRING" id="272947.gene:17555354"/>
<dbReference type="EnsemblBacteria" id="CAA14735">
    <property type="protein sequence ID" value="CAA14735"/>
    <property type="gene ID" value="CAA14735"/>
</dbReference>
<dbReference type="KEGG" id="rpr:RP273"/>
<dbReference type="PATRIC" id="fig|272947.5.peg.280"/>
<dbReference type="eggNOG" id="COG0071">
    <property type="taxonomic scope" value="Bacteria"/>
</dbReference>
<dbReference type="HOGENOM" id="CLU_135634_0_0_5"/>
<dbReference type="OrthoDB" id="9808910at2"/>
<dbReference type="Proteomes" id="UP000002480">
    <property type="component" value="Chromosome"/>
</dbReference>
<dbReference type="CDD" id="cd06464">
    <property type="entry name" value="ACD_sHsps-like"/>
    <property type="match status" value="1"/>
</dbReference>
<dbReference type="Gene3D" id="2.60.40.790">
    <property type="match status" value="1"/>
</dbReference>
<dbReference type="InterPro" id="IPR002068">
    <property type="entry name" value="A-crystallin/Hsp20_dom"/>
</dbReference>
<dbReference type="InterPro" id="IPR008978">
    <property type="entry name" value="HSP20-like_chaperone"/>
</dbReference>
<dbReference type="InterPro" id="IPR031107">
    <property type="entry name" value="Small_HSP"/>
</dbReference>
<dbReference type="PANTHER" id="PTHR11527">
    <property type="entry name" value="HEAT-SHOCK PROTEIN 20 FAMILY MEMBER"/>
    <property type="match status" value="1"/>
</dbReference>
<dbReference type="Pfam" id="PF00011">
    <property type="entry name" value="HSP20"/>
    <property type="match status" value="1"/>
</dbReference>
<dbReference type="SUPFAM" id="SSF49764">
    <property type="entry name" value="HSP20-like chaperones"/>
    <property type="match status" value="1"/>
</dbReference>
<dbReference type="PROSITE" id="PS01031">
    <property type="entry name" value="SHSP"/>
    <property type="match status" value="1"/>
</dbReference>
<name>HSPC1_RICPR</name>
<reference key="1">
    <citation type="journal article" date="1998" name="Nature">
        <title>The genome sequence of Rickettsia prowazekii and the origin of mitochondria.</title>
        <authorList>
            <person name="Andersson S.G.E."/>
            <person name="Zomorodipour A."/>
            <person name="Andersson J.O."/>
            <person name="Sicheritz-Ponten T."/>
            <person name="Alsmark U.C.M."/>
            <person name="Podowski R.M."/>
            <person name="Naeslund A.K."/>
            <person name="Eriksson A.-S."/>
            <person name="Winkler H.H."/>
            <person name="Kurland C.G."/>
        </authorList>
    </citation>
    <scope>NUCLEOTIDE SEQUENCE [LARGE SCALE GENOMIC DNA]</scope>
    <source>
        <strain>Madrid E</strain>
    </source>
</reference>
<accession>Q9ZDQ3</accession>